<accession>Q9CAX6</accession>
<keyword id="KW-0963">Cytoplasm</keyword>
<keyword id="KW-0597">Phosphoprotein</keyword>
<keyword id="KW-1185">Reference proteome</keyword>
<keyword id="KW-0687">Ribonucleoprotein</keyword>
<keyword id="KW-0689">Ribosomal protein</keyword>
<feature type="chain" id="PRO_0000123345" description="Small ribosomal subunit protein uS11y">
    <location>
        <begin position="1"/>
        <end position="150"/>
    </location>
</feature>
<feature type="modified residue" description="Phosphoserine" evidence="3">
    <location>
        <position position="19"/>
    </location>
</feature>
<name>RS142_ARATH</name>
<sequence length="150" mass="16273">MSKRKTKEPKVETVTLGPSVREGEQVFGVVHIFASFNDTFIHVTDLSGRETLVRITGGMKVKADRDESSPYAAMLAAQDVAQRCKELGITAMHVKLRATGGNKTKTPGPGAQSALRALARSGMKIGRIEDVTPIPTDSTRRKGGRRGRRL</sequence>
<evidence type="ECO:0000303" key="1">
    <source>
    </source>
</evidence>
<evidence type="ECO:0000305" key="2"/>
<evidence type="ECO:0007744" key="3">
    <source>
    </source>
</evidence>
<organism>
    <name type="scientific">Arabidopsis thaliana</name>
    <name type="common">Mouse-ear cress</name>
    <dbReference type="NCBI Taxonomy" id="3702"/>
    <lineage>
        <taxon>Eukaryota</taxon>
        <taxon>Viridiplantae</taxon>
        <taxon>Streptophyta</taxon>
        <taxon>Embryophyta</taxon>
        <taxon>Tracheophyta</taxon>
        <taxon>Spermatophyta</taxon>
        <taxon>Magnoliopsida</taxon>
        <taxon>eudicotyledons</taxon>
        <taxon>Gunneridae</taxon>
        <taxon>Pentapetalae</taxon>
        <taxon>rosids</taxon>
        <taxon>malvids</taxon>
        <taxon>Brassicales</taxon>
        <taxon>Brassicaceae</taxon>
        <taxon>Camelineae</taxon>
        <taxon>Arabidopsis</taxon>
    </lineage>
</organism>
<comment type="subcellular location">
    <subcellularLocation>
        <location>Cytoplasm</location>
    </subcellularLocation>
</comment>
<comment type="similarity">
    <text evidence="2">Belongs to the universal ribosomal protein uS11 family.</text>
</comment>
<protein>
    <recommendedName>
        <fullName evidence="1">Small ribosomal subunit protein uS11y</fullName>
    </recommendedName>
    <alternativeName>
        <fullName>40S ribosomal protein S14-2</fullName>
    </alternativeName>
</protein>
<dbReference type="EMBL" id="AC008153">
    <property type="protein sequence ID" value="AAG51428.1"/>
    <property type="molecule type" value="Genomic_DNA"/>
</dbReference>
<dbReference type="EMBL" id="CP002686">
    <property type="protein sequence ID" value="AEE75056.1"/>
    <property type="molecule type" value="Genomic_DNA"/>
</dbReference>
<dbReference type="EMBL" id="AY088571">
    <property type="protein sequence ID" value="AAM66102.1"/>
    <property type="molecule type" value="mRNA"/>
</dbReference>
<dbReference type="RefSeq" id="NP_187758.1">
    <property type="nucleotide sequence ID" value="NM_111984.5"/>
</dbReference>
<dbReference type="SMR" id="Q9CAX6"/>
<dbReference type="BioGRID" id="5658">
    <property type="interactions" value="106"/>
</dbReference>
<dbReference type="FunCoup" id="Q9CAX6">
    <property type="interactions" value="3049"/>
</dbReference>
<dbReference type="STRING" id="3702.Q9CAX6"/>
<dbReference type="iPTMnet" id="Q9CAX6"/>
<dbReference type="PaxDb" id="3702-AT3G11510.1"/>
<dbReference type="ProteomicsDB" id="226908"/>
<dbReference type="EnsemblPlants" id="AT3G11510.1">
    <property type="protein sequence ID" value="AT3G11510.1"/>
    <property type="gene ID" value="AT3G11510"/>
</dbReference>
<dbReference type="GeneID" id="820324"/>
<dbReference type="Gramene" id="AT3G11510.1">
    <property type="protein sequence ID" value="AT3G11510.1"/>
    <property type="gene ID" value="AT3G11510"/>
</dbReference>
<dbReference type="KEGG" id="ath:AT3G11510"/>
<dbReference type="Araport" id="AT3G11510"/>
<dbReference type="TAIR" id="AT3G11510"/>
<dbReference type="eggNOG" id="KOG0407">
    <property type="taxonomic scope" value="Eukaryota"/>
</dbReference>
<dbReference type="HOGENOM" id="CLU_072439_6_0_1"/>
<dbReference type="InParanoid" id="Q9CAX6"/>
<dbReference type="OMA" id="IYASHND"/>
<dbReference type="OrthoDB" id="1118048at2759"/>
<dbReference type="PhylomeDB" id="Q9CAX6"/>
<dbReference type="CD-CODE" id="4299E36E">
    <property type="entry name" value="Nucleolus"/>
</dbReference>
<dbReference type="PRO" id="PR:Q9CAX6"/>
<dbReference type="Proteomes" id="UP000006548">
    <property type="component" value="Chromosome 3"/>
</dbReference>
<dbReference type="ExpressionAtlas" id="Q9CAX6">
    <property type="expression patterns" value="baseline and differential"/>
</dbReference>
<dbReference type="GO" id="GO:0005829">
    <property type="term" value="C:cytosol"/>
    <property type="evidence" value="ECO:0007005"/>
    <property type="project" value="TAIR"/>
</dbReference>
<dbReference type="GO" id="GO:0022626">
    <property type="term" value="C:cytosolic ribosome"/>
    <property type="evidence" value="ECO:0007005"/>
    <property type="project" value="TAIR"/>
</dbReference>
<dbReference type="GO" id="GO:0022627">
    <property type="term" value="C:cytosolic small ribosomal subunit"/>
    <property type="evidence" value="ECO:0007005"/>
    <property type="project" value="TAIR"/>
</dbReference>
<dbReference type="GO" id="GO:0005730">
    <property type="term" value="C:nucleolus"/>
    <property type="evidence" value="ECO:0007005"/>
    <property type="project" value="TAIR"/>
</dbReference>
<dbReference type="GO" id="GO:0003729">
    <property type="term" value="F:mRNA binding"/>
    <property type="evidence" value="ECO:0000314"/>
    <property type="project" value="TAIR"/>
</dbReference>
<dbReference type="GO" id="GO:0003735">
    <property type="term" value="F:structural constituent of ribosome"/>
    <property type="evidence" value="ECO:0000314"/>
    <property type="project" value="CAFA"/>
</dbReference>
<dbReference type="GO" id="GO:0006412">
    <property type="term" value="P:translation"/>
    <property type="evidence" value="ECO:0007669"/>
    <property type="project" value="InterPro"/>
</dbReference>
<dbReference type="FunFam" id="3.30.420.80:FF:000002">
    <property type="entry name" value="40S ribosomal protein S14"/>
    <property type="match status" value="1"/>
</dbReference>
<dbReference type="Gene3D" id="3.30.420.80">
    <property type="entry name" value="Ribosomal protein S11"/>
    <property type="match status" value="1"/>
</dbReference>
<dbReference type="HAMAP" id="MF_01310">
    <property type="entry name" value="Ribosomal_uS11"/>
    <property type="match status" value="1"/>
</dbReference>
<dbReference type="InterPro" id="IPR001971">
    <property type="entry name" value="Ribosomal_uS11"/>
</dbReference>
<dbReference type="InterPro" id="IPR018102">
    <property type="entry name" value="Ribosomal_uS11_CS"/>
</dbReference>
<dbReference type="InterPro" id="IPR036967">
    <property type="entry name" value="Ribosomal_uS11_sf"/>
</dbReference>
<dbReference type="NCBIfam" id="NF007176">
    <property type="entry name" value="PRK09607.1"/>
    <property type="match status" value="1"/>
</dbReference>
<dbReference type="PANTHER" id="PTHR11759">
    <property type="entry name" value="40S RIBOSOMAL PROTEIN S14/30S RIBOSOMAL PROTEIN S11"/>
    <property type="match status" value="1"/>
</dbReference>
<dbReference type="Pfam" id="PF00411">
    <property type="entry name" value="Ribosomal_S11"/>
    <property type="match status" value="1"/>
</dbReference>
<dbReference type="PIRSF" id="PIRSF002131">
    <property type="entry name" value="Ribosomal_S11"/>
    <property type="match status" value="1"/>
</dbReference>
<dbReference type="SUPFAM" id="SSF53137">
    <property type="entry name" value="Translational machinery components"/>
    <property type="match status" value="1"/>
</dbReference>
<dbReference type="PROSITE" id="PS00054">
    <property type="entry name" value="RIBOSOMAL_S11"/>
    <property type="match status" value="1"/>
</dbReference>
<gene>
    <name type="primary">RPS14B</name>
    <name type="ordered locus">At3g11510</name>
    <name type="ORF">F24K9.19</name>
</gene>
<proteinExistence type="evidence at protein level"/>
<reference key="1">
    <citation type="journal article" date="2000" name="Nature">
        <title>Sequence and analysis of chromosome 3 of the plant Arabidopsis thaliana.</title>
        <authorList>
            <person name="Salanoubat M."/>
            <person name="Lemcke K."/>
            <person name="Rieger M."/>
            <person name="Ansorge W."/>
            <person name="Unseld M."/>
            <person name="Fartmann B."/>
            <person name="Valle G."/>
            <person name="Bloecker H."/>
            <person name="Perez-Alonso M."/>
            <person name="Obermaier B."/>
            <person name="Delseny M."/>
            <person name="Boutry M."/>
            <person name="Grivell L.A."/>
            <person name="Mache R."/>
            <person name="Puigdomenech P."/>
            <person name="De Simone V."/>
            <person name="Choisne N."/>
            <person name="Artiguenave F."/>
            <person name="Robert C."/>
            <person name="Brottier P."/>
            <person name="Wincker P."/>
            <person name="Cattolico L."/>
            <person name="Weissenbach J."/>
            <person name="Saurin W."/>
            <person name="Quetier F."/>
            <person name="Schaefer M."/>
            <person name="Mueller-Auer S."/>
            <person name="Gabel C."/>
            <person name="Fuchs M."/>
            <person name="Benes V."/>
            <person name="Wurmbach E."/>
            <person name="Drzonek H."/>
            <person name="Erfle H."/>
            <person name="Jordan N."/>
            <person name="Bangert S."/>
            <person name="Wiedelmann R."/>
            <person name="Kranz H."/>
            <person name="Voss H."/>
            <person name="Holland R."/>
            <person name="Brandt P."/>
            <person name="Nyakatura G."/>
            <person name="Vezzi A."/>
            <person name="D'Angelo M."/>
            <person name="Pallavicini A."/>
            <person name="Toppo S."/>
            <person name="Simionati B."/>
            <person name="Conrad A."/>
            <person name="Hornischer K."/>
            <person name="Kauer G."/>
            <person name="Loehnert T.-H."/>
            <person name="Nordsiek G."/>
            <person name="Reichelt J."/>
            <person name="Scharfe M."/>
            <person name="Schoen O."/>
            <person name="Bargues M."/>
            <person name="Terol J."/>
            <person name="Climent J."/>
            <person name="Navarro P."/>
            <person name="Collado C."/>
            <person name="Perez-Perez A."/>
            <person name="Ottenwaelder B."/>
            <person name="Duchemin D."/>
            <person name="Cooke R."/>
            <person name="Laudie M."/>
            <person name="Berger-Llauro C."/>
            <person name="Purnelle B."/>
            <person name="Masuy D."/>
            <person name="de Haan M."/>
            <person name="Maarse A.C."/>
            <person name="Alcaraz J.-P."/>
            <person name="Cottet A."/>
            <person name="Casacuberta E."/>
            <person name="Monfort A."/>
            <person name="Argiriou A."/>
            <person name="Flores M."/>
            <person name="Liguori R."/>
            <person name="Vitale D."/>
            <person name="Mannhaupt G."/>
            <person name="Haase D."/>
            <person name="Schoof H."/>
            <person name="Rudd S."/>
            <person name="Zaccaria P."/>
            <person name="Mewes H.-W."/>
            <person name="Mayer K.F.X."/>
            <person name="Kaul S."/>
            <person name="Town C.D."/>
            <person name="Koo H.L."/>
            <person name="Tallon L.J."/>
            <person name="Jenkins J."/>
            <person name="Rooney T."/>
            <person name="Rizzo M."/>
            <person name="Walts A."/>
            <person name="Utterback T."/>
            <person name="Fujii C.Y."/>
            <person name="Shea T.P."/>
            <person name="Creasy T.H."/>
            <person name="Haas B."/>
            <person name="Maiti R."/>
            <person name="Wu D."/>
            <person name="Peterson J."/>
            <person name="Van Aken S."/>
            <person name="Pai G."/>
            <person name="Militscher J."/>
            <person name="Sellers P."/>
            <person name="Gill J.E."/>
            <person name="Feldblyum T.V."/>
            <person name="Preuss D."/>
            <person name="Lin X."/>
            <person name="Nierman W.C."/>
            <person name="Salzberg S.L."/>
            <person name="White O."/>
            <person name="Venter J.C."/>
            <person name="Fraser C.M."/>
            <person name="Kaneko T."/>
            <person name="Nakamura Y."/>
            <person name="Sato S."/>
            <person name="Kato T."/>
            <person name="Asamizu E."/>
            <person name="Sasamoto S."/>
            <person name="Kimura T."/>
            <person name="Idesawa K."/>
            <person name="Kawashima K."/>
            <person name="Kishida Y."/>
            <person name="Kiyokawa C."/>
            <person name="Kohara M."/>
            <person name="Matsumoto M."/>
            <person name="Matsuno A."/>
            <person name="Muraki A."/>
            <person name="Nakayama S."/>
            <person name="Nakazaki N."/>
            <person name="Shinpo S."/>
            <person name="Takeuchi C."/>
            <person name="Wada T."/>
            <person name="Watanabe A."/>
            <person name="Yamada M."/>
            <person name="Yasuda M."/>
            <person name="Tabata S."/>
        </authorList>
    </citation>
    <scope>NUCLEOTIDE SEQUENCE [LARGE SCALE GENOMIC DNA]</scope>
    <source>
        <strain>cv. Columbia</strain>
    </source>
</reference>
<reference key="2">
    <citation type="journal article" date="2017" name="Plant J.">
        <title>Araport11: a complete reannotation of the Arabidopsis thaliana reference genome.</title>
        <authorList>
            <person name="Cheng C.Y."/>
            <person name="Krishnakumar V."/>
            <person name="Chan A.P."/>
            <person name="Thibaud-Nissen F."/>
            <person name="Schobel S."/>
            <person name="Town C.D."/>
        </authorList>
    </citation>
    <scope>GENOME REANNOTATION</scope>
    <source>
        <strain>cv. Columbia</strain>
    </source>
</reference>
<reference key="3">
    <citation type="submission" date="2002-03" db="EMBL/GenBank/DDBJ databases">
        <title>Full-length cDNA from Arabidopsis thaliana.</title>
        <authorList>
            <person name="Brover V.V."/>
            <person name="Troukhan M.E."/>
            <person name="Alexandrov N.A."/>
            <person name="Lu Y.-P."/>
            <person name="Flavell R.B."/>
            <person name="Feldmann K.A."/>
        </authorList>
    </citation>
    <scope>NUCLEOTIDE SEQUENCE [LARGE SCALE MRNA]</scope>
</reference>
<reference key="4">
    <citation type="journal article" date="2001" name="Plant Physiol.">
        <title>The organization of cytoplasmic ribosomal protein genes in the Arabidopsis genome.</title>
        <authorList>
            <person name="Barakat A."/>
            <person name="Szick-Miranda K."/>
            <person name="Chang I.-F."/>
            <person name="Guyot R."/>
            <person name="Blanc G."/>
            <person name="Cooke R."/>
            <person name="Delseny M."/>
            <person name="Bailey-Serres J."/>
        </authorList>
    </citation>
    <scope>GENE FAMILY ORGANIZATION</scope>
    <scope>NOMENCLATURE</scope>
</reference>
<reference key="5">
    <citation type="journal article" date="2009" name="Plant Physiol.">
        <title>Large-scale Arabidopsis phosphoproteome profiling reveals novel chloroplast kinase substrates and phosphorylation networks.</title>
        <authorList>
            <person name="Reiland S."/>
            <person name="Messerli G."/>
            <person name="Baerenfaller K."/>
            <person name="Gerrits B."/>
            <person name="Endler A."/>
            <person name="Grossmann J."/>
            <person name="Gruissem W."/>
            <person name="Baginsky S."/>
        </authorList>
    </citation>
    <scope>PHOSPHORYLATION [LARGE SCALE ANALYSIS] AT SER-19</scope>
    <scope>IDENTIFICATION BY MASS SPECTROMETRY [LARGE SCALE ANALYSIS]</scope>
</reference>
<reference key="6">
    <citation type="journal article" date="2023" name="Plant Cell">
        <title>An updated nomenclature for plant ribosomal protein genes.</title>
        <authorList>
            <person name="Scarpin M.R."/>
            <person name="Busche M."/>
            <person name="Martinez R.E."/>
            <person name="Harper L.C."/>
            <person name="Reiser L."/>
            <person name="Szakonyi D."/>
            <person name="Merchante C."/>
            <person name="Lan T."/>
            <person name="Xiong W."/>
            <person name="Mo B."/>
            <person name="Tang G."/>
            <person name="Chen X."/>
            <person name="Bailey-Serres J."/>
            <person name="Browning K.S."/>
            <person name="Brunkard J.O."/>
        </authorList>
    </citation>
    <scope>NOMENCLATURE</scope>
</reference>